<organism>
    <name type="scientific">Mus musculus</name>
    <name type="common">Mouse</name>
    <dbReference type="NCBI Taxonomy" id="10090"/>
    <lineage>
        <taxon>Eukaryota</taxon>
        <taxon>Metazoa</taxon>
        <taxon>Chordata</taxon>
        <taxon>Craniata</taxon>
        <taxon>Vertebrata</taxon>
        <taxon>Euteleostomi</taxon>
        <taxon>Mammalia</taxon>
        <taxon>Eutheria</taxon>
        <taxon>Euarchontoglires</taxon>
        <taxon>Glires</taxon>
        <taxon>Rodentia</taxon>
        <taxon>Myomorpha</taxon>
        <taxon>Muroidea</taxon>
        <taxon>Muridae</taxon>
        <taxon>Murinae</taxon>
        <taxon>Mus</taxon>
        <taxon>Mus</taxon>
    </lineage>
</organism>
<keyword id="KW-0325">Glycoprotein</keyword>
<keyword id="KW-0472">Membrane</keyword>
<keyword id="KW-1185">Reference proteome</keyword>
<keyword id="KW-0812">Transmembrane</keyword>
<keyword id="KW-1133">Transmembrane helix</keyword>
<keyword id="KW-0813">Transport</keyword>
<name>S19A3_MOUSE</name>
<gene>
    <name type="primary">Slc19a3</name>
</gene>
<comment type="function">
    <text evidence="4 5 6">High-affinity transporter for the intake of thiamine (PubMed:22194418, PubMed:35512554, PubMed:35724964). Unlike the human ortholog, lacks H(+)-dependent pyridoxine transport activity due to an absence of seven critical amino-acids required for pyridoxine transport (PubMed:35512554, PubMed:35724964).</text>
</comment>
<comment type="catalytic activity">
    <reaction evidence="4 5 6">
        <text>thiamine(out) + H(+)(in) = thiamine(in) + H(+)(out)</text>
        <dbReference type="Rhea" id="RHEA:71271"/>
        <dbReference type="ChEBI" id="CHEBI:15378"/>
        <dbReference type="ChEBI" id="CHEBI:18385"/>
    </reaction>
</comment>
<comment type="subcellular location">
    <subcellularLocation>
        <location evidence="7">Membrane</location>
        <topology evidence="7">Multi-pass membrane protein</topology>
    </subcellularLocation>
</comment>
<comment type="tissue specificity">
    <text evidence="3 4">High expression in kidney, brain, lung and small intestine (PubMed:11136550). Detected in pancreatic acinar cells (at protein level) (PubMed:22194418). Also expressed strongly in pancreatic islet cells (PubMed:22194418).</text>
</comment>
<comment type="disruption phenotype">
    <text evidence="4">Thiamine uptake by pancreatic acinar cells from knockout mice was found to be significantly lower than uptake by pancreatic acinar cells of the wild-type littermates.</text>
</comment>
<comment type="similarity">
    <text evidence="7">Belongs to the reduced folate carrier (RFC) transporter (TC 2.A.48) family.</text>
</comment>
<protein>
    <recommendedName>
        <fullName>Thiamine transporter 2</fullName>
        <shortName>ThTr-2</shortName>
        <shortName>ThTr2</shortName>
    </recommendedName>
    <alternativeName>
        <fullName>Solute carrier family 19 member 3</fullName>
    </alternativeName>
</protein>
<feature type="chain" id="PRO_0000232658" description="Thiamine transporter 2">
    <location>
        <begin position="1"/>
        <end position="488"/>
    </location>
</feature>
<feature type="topological domain" description="Cytoplasmic" evidence="1">
    <location>
        <begin position="1"/>
        <end position="8"/>
    </location>
</feature>
<feature type="transmembrane region" description="Helical" evidence="1">
    <location>
        <begin position="9"/>
        <end position="29"/>
    </location>
</feature>
<feature type="topological domain" description="Extracellular" evidence="1">
    <location>
        <begin position="30"/>
        <end position="54"/>
    </location>
</feature>
<feature type="transmembrane region" description="Helical" evidence="1">
    <location>
        <begin position="55"/>
        <end position="75"/>
    </location>
</feature>
<feature type="topological domain" description="Cytoplasmic" evidence="1">
    <location>
        <begin position="76"/>
        <end position="82"/>
    </location>
</feature>
<feature type="transmembrane region" description="Helical" evidence="1">
    <location>
        <begin position="83"/>
        <end position="103"/>
    </location>
</feature>
<feature type="topological domain" description="Extracellular" evidence="1">
    <location>
        <begin position="104"/>
        <end position="111"/>
    </location>
</feature>
<feature type="transmembrane region" description="Helical" evidence="1">
    <location>
        <begin position="112"/>
        <end position="132"/>
    </location>
</feature>
<feature type="topological domain" description="Cytoplasmic" evidence="1">
    <location>
        <begin position="133"/>
        <end position="145"/>
    </location>
</feature>
<feature type="transmembrane region" description="Helical" evidence="1">
    <location>
        <begin position="146"/>
        <end position="166"/>
    </location>
</feature>
<feature type="topological domain" description="Extracellular" evidence="1">
    <location>
        <begin position="167"/>
        <end position="172"/>
    </location>
</feature>
<feature type="transmembrane region" description="Helical" evidence="1">
    <location>
        <begin position="173"/>
        <end position="193"/>
    </location>
</feature>
<feature type="topological domain" description="Cytoplasmic" evidence="1">
    <location>
        <begin position="194"/>
        <end position="276"/>
    </location>
</feature>
<feature type="transmembrane region" description="Helical" evidence="1">
    <location>
        <begin position="277"/>
        <end position="297"/>
    </location>
</feature>
<feature type="topological domain" description="Extracellular" evidence="1">
    <location>
        <begin position="298"/>
        <end position="310"/>
    </location>
</feature>
<feature type="transmembrane region" description="Helical" evidence="1">
    <location>
        <begin position="311"/>
        <end position="331"/>
    </location>
</feature>
<feature type="topological domain" description="Cytoplasmic" evidence="1">
    <location>
        <begin position="332"/>
        <end position="335"/>
    </location>
</feature>
<feature type="transmembrane region" description="Helical" evidence="1">
    <location>
        <begin position="336"/>
        <end position="356"/>
    </location>
</feature>
<feature type="topological domain" description="Extracellular" evidence="1">
    <location>
        <begin position="357"/>
        <end position="369"/>
    </location>
</feature>
<feature type="transmembrane region" description="Helical" evidence="1">
    <location>
        <begin position="370"/>
        <end position="390"/>
    </location>
</feature>
<feature type="topological domain" description="Cytoplasmic" evidence="1">
    <location>
        <begin position="391"/>
        <end position="399"/>
    </location>
</feature>
<feature type="transmembrane region" description="Helical" evidence="1">
    <location>
        <begin position="400"/>
        <end position="420"/>
    </location>
</feature>
<feature type="topological domain" description="Extracellular" evidence="1">
    <location>
        <begin position="421"/>
        <end position="428"/>
    </location>
</feature>
<feature type="transmembrane region" description="Helical" evidence="1">
    <location>
        <begin position="429"/>
        <end position="449"/>
    </location>
</feature>
<feature type="topological domain" description="Cytoplasmic" evidence="1">
    <location>
        <begin position="450"/>
        <end position="488"/>
    </location>
</feature>
<feature type="region of interest" description="Disordered" evidence="2">
    <location>
        <begin position="469"/>
        <end position="488"/>
    </location>
</feature>
<feature type="glycosylation site" description="N-linked (GlcNAc...) asparagine" evidence="1">
    <location>
        <position position="46"/>
    </location>
</feature>
<feature type="glycosylation site" description="N-linked (GlcNAc...) asparagine" evidence="1">
    <location>
        <position position="358"/>
    </location>
</feature>
<feature type="mutagenesis site" description="Can mediate pyridoxine transport; when associated with G-88; I-92; T-94; W-95; S-169 and N-174." evidence="6">
    <original>H</original>
    <variation>Q</variation>
    <location>
        <position position="87"/>
    </location>
</feature>
<feature type="mutagenesis site" description="Can mediate pyridoxine transport; when associated with Q-87; I-92; T-94; W-95; S-169 and N-174." evidence="6">
    <original>V</original>
    <variation>G</variation>
    <location>
        <position position="88"/>
    </location>
</feature>
<feature type="mutagenesis site" description="Can mediate pyridoxine transport; when associated with Q-87; G-88; T-94; W-95; S-169 and N-174." evidence="6">
    <original>A</original>
    <variation>I</variation>
    <location>
        <position position="92"/>
    </location>
</feature>
<feature type="mutagenesis site" description="Can mediate pyridoxine transport; when associated with Q-87; G-88; I-92; W-95; S-169 and N-174." evidence="6">
    <original>S</original>
    <variation>T</variation>
    <location>
        <position position="94"/>
    </location>
</feature>
<feature type="mutagenesis site" description="Can mediate pyridoxine transport; when associated with Q-87; G-88; I-92; T-94; S-169 and N-174." evidence="6">
    <original>Y</original>
    <variation>W</variation>
    <location>
        <position position="95"/>
    </location>
</feature>
<feature type="mutagenesis site" description="Can mediate pyridoxine transport; when associated with Q-87; G-88; I-92; T-94; W-95 and N-174." evidence="6">
    <original>P</original>
    <variation>S</variation>
    <location>
        <position position="169"/>
    </location>
</feature>
<feature type="mutagenesis site" description="Can mediate pyridoxine transport; when associated with Q-87; G-88; I-92; T-94; W-95 and S-169." evidence="6">
    <original>F</original>
    <variation>N</variation>
    <location>
        <position position="174"/>
    </location>
</feature>
<feature type="sequence conflict" description="In Ref. 1; AAG53880." evidence="7" ref="1">
    <original>Y</original>
    <variation>H</variation>
    <location>
        <position position="129"/>
    </location>
</feature>
<feature type="sequence conflict" description="In Ref. 1; AAG53880." evidence="7" ref="1">
    <original>V</original>
    <variation>G</variation>
    <location>
        <position position="183"/>
    </location>
</feature>
<feature type="sequence conflict" description="In Ref. 1; AAG53880." evidence="7" ref="1">
    <original>V</original>
    <variation>G</variation>
    <location>
        <position position="218"/>
    </location>
</feature>
<feature type="sequence conflict" description="In Ref. 1; AAG53880." evidence="7" ref="1">
    <original>F</original>
    <variation>V</variation>
    <location>
        <position position="232"/>
    </location>
</feature>
<feature type="sequence conflict" description="In Ref. 1; AAG53880." evidence="7" ref="1">
    <original>M</original>
    <variation>K</variation>
    <location>
        <position position="357"/>
    </location>
</feature>
<reference key="1">
    <citation type="journal article" date="2000" name="Mol. Genet. Metab.">
        <title>Identification and characterization of the human and mouse SLC19A3 gene: a novel member of the reduced folate family of micronutrient transporter genes.</title>
        <authorList>
            <person name="Eudy J.D."/>
            <person name="Spiegelstein O."/>
            <person name="Barber R.C."/>
            <person name="Wlodarczyk B.J."/>
            <person name="Talbot J."/>
            <person name="Finnell R.H."/>
        </authorList>
    </citation>
    <scope>NUCLEOTIDE SEQUENCE [MRNA]</scope>
    <scope>TISSUE SPECIFICITY</scope>
    <source>
        <tissue>Kidney</tissue>
    </source>
</reference>
<reference key="2">
    <citation type="journal article" date="2004" name="Genome Res.">
        <title>The status, quality, and expansion of the NIH full-length cDNA project: the Mammalian Gene Collection (MGC).</title>
        <authorList>
            <consortium name="The MGC Project Team"/>
        </authorList>
    </citation>
    <scope>NUCLEOTIDE SEQUENCE [LARGE SCALE MRNA]</scope>
</reference>
<reference key="3">
    <citation type="journal article" date="2004" name="Pflugers Arch.">
        <title>SLC19: the folate/thiamine transporter family.</title>
        <authorList>
            <person name="Ganapathy V."/>
            <person name="Smith S.B."/>
            <person name="Prasad P.D."/>
        </authorList>
    </citation>
    <scope>REVIEW</scope>
</reference>
<reference key="4">
    <citation type="journal article" date="2012" name="Am. J. Physiol.">
        <title>Relative contribution of THTR-1 and THTR-2 in thiamin uptake by pancreatic acinar cells: studies utilizing Slc19a2 and Slc19a3 knockout mouse models.</title>
        <authorList>
            <person name="Subramanian V.S."/>
            <person name="Subramanya S.B."/>
            <person name="Said H.M."/>
        </authorList>
    </citation>
    <scope>FUNCTION</scope>
    <scope>TISSUE SPECIFICITY</scope>
    <scope>DISRUPTION PHENOTYPE</scope>
    <scope>TRANSPORTER ACTIVITY</scope>
</reference>
<reference key="5">
    <citation type="journal article" date="2022" name="Drug Metab. Pharmacokinet.">
        <title>Animal species differences in the pyridoxine transport function of SLC19A3: Absence of Slc19a3-mediated pyridoxine uptake in the rat small intestine.</title>
        <authorList>
            <person name="Yamashiro T."/>
            <person name="Yasujima T."/>
            <person name="Yuasa H."/>
        </authorList>
    </citation>
    <scope>FUNCTION</scope>
    <scope>TRANSPORTER ACTIVITY</scope>
</reference>
<reference key="6">
    <citation type="journal article" date="2022" name="J. Biol. Chem.">
        <title>Identification of the amino acid residues involved in the species-dependent differences in the pyridoxine transport function of SLC19A3.</title>
        <authorList>
            <person name="Miyake K."/>
            <person name="Yasujima T."/>
            <person name="Takahashi S."/>
            <person name="Yamashiro T."/>
            <person name="Yuasa H."/>
        </authorList>
    </citation>
    <scope>FUNCTION</scope>
    <scope>TRANSPORTER ACTIVITY</scope>
    <scope>MUTAGENESIS OF HIS-87; VAL-88; ALA-92; SER-94; TYR-95; PRO-169 AND PHE-174</scope>
</reference>
<proteinExistence type="evidence at protein level"/>
<accession>Q99PL8</accession>
<accession>Q32MF5</accession>
<evidence type="ECO:0000255" key="1"/>
<evidence type="ECO:0000256" key="2">
    <source>
        <dbReference type="SAM" id="MobiDB-lite"/>
    </source>
</evidence>
<evidence type="ECO:0000269" key="3">
    <source>
    </source>
</evidence>
<evidence type="ECO:0000269" key="4">
    <source>
    </source>
</evidence>
<evidence type="ECO:0000269" key="5">
    <source>
    </source>
</evidence>
<evidence type="ECO:0000269" key="6">
    <source>
    </source>
</evidence>
<evidence type="ECO:0000305" key="7"/>
<dbReference type="EMBL" id="AF271634">
    <property type="protein sequence ID" value="AAG53880.1"/>
    <property type="molecule type" value="mRNA"/>
</dbReference>
<dbReference type="EMBL" id="BC109154">
    <property type="protein sequence ID" value="AAI09155.1"/>
    <property type="molecule type" value="mRNA"/>
</dbReference>
<dbReference type="EMBL" id="BC109155">
    <property type="protein sequence ID" value="AAI09156.1"/>
    <property type="molecule type" value="mRNA"/>
</dbReference>
<dbReference type="CCDS" id="CCDS15101.1"/>
<dbReference type="RefSeq" id="NP_001419498.1">
    <property type="nucleotide sequence ID" value="NM_001432569.1"/>
</dbReference>
<dbReference type="RefSeq" id="NP_001419500.1">
    <property type="nucleotide sequence ID" value="NM_001432571.1"/>
</dbReference>
<dbReference type="RefSeq" id="NP_001419502.1">
    <property type="nucleotide sequence ID" value="NM_001432573.1"/>
</dbReference>
<dbReference type="RefSeq" id="NP_085033.2">
    <property type="nucleotide sequence ID" value="NM_030556.3"/>
</dbReference>
<dbReference type="RefSeq" id="XP_006496642.1">
    <property type="nucleotide sequence ID" value="XM_006496579.3"/>
</dbReference>
<dbReference type="RefSeq" id="XP_006496643.1">
    <property type="nucleotide sequence ID" value="XM_006496580.3"/>
</dbReference>
<dbReference type="RefSeq" id="XP_011237017.1">
    <property type="nucleotide sequence ID" value="XM_011238715.4"/>
</dbReference>
<dbReference type="RefSeq" id="XP_011237018.1">
    <property type="nucleotide sequence ID" value="XM_011238716.2"/>
</dbReference>
<dbReference type="RefSeq" id="XP_036010334.1">
    <property type="nucleotide sequence ID" value="XM_036154441.1"/>
</dbReference>
<dbReference type="RefSeq" id="XP_036010341.1">
    <property type="nucleotide sequence ID" value="XM_036154448.1"/>
</dbReference>
<dbReference type="SMR" id="Q99PL8"/>
<dbReference type="FunCoup" id="Q99PL8">
    <property type="interactions" value="361"/>
</dbReference>
<dbReference type="STRING" id="10090.ENSMUSP00000041683"/>
<dbReference type="GlyCosmos" id="Q99PL8">
    <property type="glycosylation" value="2 sites, No reported glycans"/>
</dbReference>
<dbReference type="GlyGen" id="Q99PL8">
    <property type="glycosylation" value="2 sites"/>
</dbReference>
<dbReference type="iPTMnet" id="Q99PL8"/>
<dbReference type="PhosphoSitePlus" id="Q99PL8"/>
<dbReference type="PaxDb" id="10090-ENSMUSP00000126646"/>
<dbReference type="ProteomicsDB" id="256860"/>
<dbReference type="Antibodypedia" id="34387">
    <property type="antibodies" value="123 antibodies from 23 providers"/>
</dbReference>
<dbReference type="DNASU" id="80721"/>
<dbReference type="Ensembl" id="ENSMUST00000045560.15">
    <property type="protein sequence ID" value="ENSMUSP00000041683.9"/>
    <property type="gene ID" value="ENSMUSG00000038496.17"/>
</dbReference>
<dbReference type="Ensembl" id="ENSMUST00000164473.2">
    <property type="protein sequence ID" value="ENSMUSP00000126646.2"/>
    <property type="gene ID" value="ENSMUSG00000038496.17"/>
</dbReference>
<dbReference type="GeneID" id="80721"/>
<dbReference type="KEGG" id="mmu:80721"/>
<dbReference type="UCSC" id="uc007bsi.2">
    <property type="organism name" value="mouse"/>
</dbReference>
<dbReference type="AGR" id="MGI:1931307"/>
<dbReference type="CTD" id="80704"/>
<dbReference type="MGI" id="MGI:1931307">
    <property type="gene designation" value="Slc19a3"/>
</dbReference>
<dbReference type="VEuPathDB" id="HostDB:ENSMUSG00000038496"/>
<dbReference type="eggNOG" id="KOG3810">
    <property type="taxonomic scope" value="Eukaryota"/>
</dbReference>
<dbReference type="GeneTree" id="ENSGT00950000183022"/>
<dbReference type="HOGENOM" id="CLU_036909_0_0_1"/>
<dbReference type="InParanoid" id="Q99PL8"/>
<dbReference type="OMA" id="DIWACYA"/>
<dbReference type="OrthoDB" id="18814at2759"/>
<dbReference type="PhylomeDB" id="Q99PL8"/>
<dbReference type="TreeFam" id="TF313684"/>
<dbReference type="Reactome" id="R-MMU-196819">
    <property type="pathway name" value="Vitamin B1 (thiamin) metabolism"/>
</dbReference>
<dbReference type="BioGRID-ORCS" id="80721">
    <property type="hits" value="1 hit in 77 CRISPR screens"/>
</dbReference>
<dbReference type="PRO" id="PR:Q99PL8"/>
<dbReference type="Proteomes" id="UP000000589">
    <property type="component" value="Chromosome 1"/>
</dbReference>
<dbReference type="RNAct" id="Q99PL8">
    <property type="molecule type" value="protein"/>
</dbReference>
<dbReference type="Bgee" id="ENSMUSG00000038496">
    <property type="expression patterns" value="Expressed in duodenum and 71 other cell types or tissues"/>
</dbReference>
<dbReference type="GO" id="GO:0005886">
    <property type="term" value="C:plasma membrane"/>
    <property type="evidence" value="ECO:0000314"/>
    <property type="project" value="MGI"/>
</dbReference>
<dbReference type="GO" id="GO:0015234">
    <property type="term" value="F:thiamine transmembrane transporter activity"/>
    <property type="evidence" value="ECO:0000315"/>
    <property type="project" value="BHF-UCL"/>
</dbReference>
<dbReference type="GO" id="GO:0031923">
    <property type="term" value="P:pyridoxine transport"/>
    <property type="evidence" value="ECO:0007669"/>
    <property type="project" value="Ensembl"/>
</dbReference>
<dbReference type="GO" id="GO:0009229">
    <property type="term" value="P:thiamine diphosphate biosynthetic process"/>
    <property type="evidence" value="ECO:0000314"/>
    <property type="project" value="MGI"/>
</dbReference>
<dbReference type="GO" id="GO:0071934">
    <property type="term" value="P:thiamine transmembrane transport"/>
    <property type="evidence" value="ECO:0000315"/>
    <property type="project" value="BHF-UCL"/>
</dbReference>
<dbReference type="GO" id="GO:0015888">
    <property type="term" value="P:thiamine transport"/>
    <property type="evidence" value="ECO:0000314"/>
    <property type="project" value="UniProtKB"/>
</dbReference>
<dbReference type="FunFam" id="1.20.1250.20:FF:000225">
    <property type="entry name" value="Solute carrier family 19 member 1"/>
    <property type="match status" value="1"/>
</dbReference>
<dbReference type="Gene3D" id="1.20.1250.20">
    <property type="entry name" value="MFS general substrate transporter like domains"/>
    <property type="match status" value="1"/>
</dbReference>
<dbReference type="InterPro" id="IPR002666">
    <property type="entry name" value="Folate_carrier"/>
</dbReference>
<dbReference type="InterPro" id="IPR036259">
    <property type="entry name" value="MFS_trans_sf"/>
</dbReference>
<dbReference type="InterPro" id="IPR028337">
    <property type="entry name" value="ThTr-2"/>
</dbReference>
<dbReference type="NCBIfam" id="TIGR00806">
    <property type="entry name" value="rfc"/>
    <property type="match status" value="1"/>
</dbReference>
<dbReference type="PANTHER" id="PTHR10686">
    <property type="entry name" value="FOLATE TRANSPORTER"/>
    <property type="match status" value="1"/>
</dbReference>
<dbReference type="PANTHER" id="PTHR10686:SF37">
    <property type="entry name" value="THIAMINE TRANSPORTER 2"/>
    <property type="match status" value="1"/>
</dbReference>
<dbReference type="Pfam" id="PF01770">
    <property type="entry name" value="Folate_carrier"/>
    <property type="match status" value="1"/>
</dbReference>
<dbReference type="PIRSF" id="PIRSF028739">
    <property type="entry name" value="Folate_carrier"/>
    <property type="match status" value="1"/>
</dbReference>
<dbReference type="PIRSF" id="PIRSF500795">
    <property type="entry name" value="Thiamine_transporter_2"/>
    <property type="match status" value="1"/>
</dbReference>
<dbReference type="SUPFAM" id="SSF103473">
    <property type="entry name" value="MFS general substrate transporter"/>
    <property type="match status" value="1"/>
</dbReference>
<sequence>MDSSCRTPPSNSWVYPTVILCLFGFFSMFRPSEAFLIPFLSEPSKNLTSPEMTNEILPVWTYSYLATLPPVFVLTDYLRYKPVIMLHVVAFATSYLFLLFGQGVMLMQTAEFFFGVVSATEIAYFAYIYSMVSPEHYQKVSSYCRSITLVAYTAGSVLAQLLVSLTNLPYSSLFYISLACVSVAFFFSLFLPMPKKSMFFHAKSDRDDCPKPLEQCTVPKEAQSNRTHSELFANSKNLEDREMSNPDPENSALRHFAHWFQDLKECYSSKHLVYWSLWWAFATAGYNQILNYVQVLWEHKAPSQDSSIYNGAVEAIATFGGALASFSVGYLKVNWDLLGELGLAVFSAVIAGSLFLMNYSRSIWVCYAGYLLVKSSYSFLITIAVFQIAVNLSLERYALVFGIDTFIALVIQTIMTMIVVDQRGLQLPVTTQFLVYGSYFAVIAGVFLMRSIYILCSAKCRKEVQNLATTRSPNEPHPQEPSNVSTKF</sequence>